<name>ATPF1_RHOPT</name>
<sequence>MAIFGEAETWVAIAFVILLGVFAYLGVHRTVLQALDKRRDRIKAELDEARKLKDEAAKLLADYRARRASAEREAQAIVDSAKADAERIAAEAKAKLEDFVARRTKTAESKIALAEAQALADVRAAAAEAAVAAASRILSESVKGNLADELLSKGIQEVRGKLN</sequence>
<keyword id="KW-0066">ATP synthesis</keyword>
<keyword id="KW-0997">Cell inner membrane</keyword>
<keyword id="KW-1003">Cell membrane</keyword>
<keyword id="KW-0138">CF(0)</keyword>
<keyword id="KW-0375">Hydrogen ion transport</keyword>
<keyword id="KW-0406">Ion transport</keyword>
<keyword id="KW-0472">Membrane</keyword>
<keyword id="KW-0812">Transmembrane</keyword>
<keyword id="KW-1133">Transmembrane helix</keyword>
<keyword id="KW-0813">Transport</keyword>
<reference key="1">
    <citation type="submission" date="2008-05" db="EMBL/GenBank/DDBJ databases">
        <title>Complete sequence of Rhodopseudomonas palustris TIE-1.</title>
        <authorList>
            <consortium name="US DOE Joint Genome Institute"/>
            <person name="Lucas S."/>
            <person name="Copeland A."/>
            <person name="Lapidus A."/>
            <person name="Glavina del Rio T."/>
            <person name="Dalin E."/>
            <person name="Tice H."/>
            <person name="Pitluck S."/>
            <person name="Chain P."/>
            <person name="Malfatti S."/>
            <person name="Shin M."/>
            <person name="Vergez L."/>
            <person name="Lang D."/>
            <person name="Schmutz J."/>
            <person name="Larimer F."/>
            <person name="Land M."/>
            <person name="Hauser L."/>
            <person name="Kyrpides N."/>
            <person name="Mikhailova N."/>
            <person name="Emerson D."/>
            <person name="Newman D.K."/>
            <person name="Roden E."/>
            <person name="Richardson P."/>
        </authorList>
    </citation>
    <scope>NUCLEOTIDE SEQUENCE [LARGE SCALE GENOMIC DNA]</scope>
    <source>
        <strain>TIE-1</strain>
    </source>
</reference>
<protein>
    <recommendedName>
        <fullName evidence="1">ATP synthase subunit b 1</fullName>
    </recommendedName>
    <alternativeName>
        <fullName evidence="1">ATP synthase F(0) sector subunit b 1</fullName>
    </alternativeName>
    <alternativeName>
        <fullName evidence="1">ATPase subunit I 1</fullName>
    </alternativeName>
    <alternativeName>
        <fullName evidence="1">F-type ATPase subunit b 1</fullName>
        <shortName evidence="1">F-ATPase subunit b 1</shortName>
    </alternativeName>
</protein>
<comment type="function">
    <text evidence="1">F(1)F(0) ATP synthase produces ATP from ADP in the presence of a proton or sodium gradient. F-type ATPases consist of two structural domains, F(1) containing the extramembraneous catalytic core and F(0) containing the membrane proton channel, linked together by a central stalk and a peripheral stalk. During catalysis, ATP synthesis in the catalytic domain of F(1) is coupled via a rotary mechanism of the central stalk subunits to proton translocation.</text>
</comment>
<comment type="function">
    <text evidence="1">Component of the F(0) channel, it forms part of the peripheral stalk, linking F(1) to F(0).</text>
</comment>
<comment type="subunit">
    <text evidence="1">F-type ATPases have 2 components, F(1) - the catalytic core - and F(0) - the membrane proton channel. F(1) has five subunits: alpha(3), beta(3), gamma(1), delta(1), epsilon(1). F(0) has three main subunits: a(1), b(2) and c(10-14). The alpha and beta chains form an alternating ring which encloses part of the gamma chain. F(1) is attached to F(0) by a central stalk formed by the gamma and epsilon chains, while a peripheral stalk is formed by the delta and b chains.</text>
</comment>
<comment type="subcellular location">
    <subcellularLocation>
        <location evidence="1">Cell inner membrane</location>
        <topology evidence="1">Single-pass membrane protein</topology>
    </subcellularLocation>
</comment>
<comment type="similarity">
    <text evidence="1">Belongs to the ATPase B chain family.</text>
</comment>
<feature type="chain" id="PRO_0000368725" description="ATP synthase subunit b 1">
    <location>
        <begin position="1"/>
        <end position="163"/>
    </location>
</feature>
<feature type="transmembrane region" description="Helical" evidence="1">
    <location>
        <begin position="7"/>
        <end position="27"/>
    </location>
</feature>
<proteinExistence type="inferred from homology"/>
<accession>B3QF34</accession>
<gene>
    <name evidence="1" type="primary">atpF1</name>
    <name type="ordered locus">Rpal_0911</name>
</gene>
<dbReference type="EMBL" id="CP001096">
    <property type="protein sequence ID" value="ACE99468.1"/>
    <property type="molecule type" value="Genomic_DNA"/>
</dbReference>
<dbReference type="RefSeq" id="WP_011156595.1">
    <property type="nucleotide sequence ID" value="NC_011004.1"/>
</dbReference>
<dbReference type="SMR" id="B3QF34"/>
<dbReference type="KEGG" id="rpt:Rpal_0911"/>
<dbReference type="HOGENOM" id="CLU_079215_6_1_5"/>
<dbReference type="OrthoDB" id="8479836at2"/>
<dbReference type="Proteomes" id="UP000001725">
    <property type="component" value="Chromosome"/>
</dbReference>
<dbReference type="GO" id="GO:0005886">
    <property type="term" value="C:plasma membrane"/>
    <property type="evidence" value="ECO:0007669"/>
    <property type="project" value="UniProtKB-SubCell"/>
</dbReference>
<dbReference type="GO" id="GO:0045259">
    <property type="term" value="C:proton-transporting ATP synthase complex"/>
    <property type="evidence" value="ECO:0007669"/>
    <property type="project" value="UniProtKB-KW"/>
</dbReference>
<dbReference type="GO" id="GO:0046933">
    <property type="term" value="F:proton-transporting ATP synthase activity, rotational mechanism"/>
    <property type="evidence" value="ECO:0007669"/>
    <property type="project" value="UniProtKB-UniRule"/>
</dbReference>
<dbReference type="GO" id="GO:0046961">
    <property type="term" value="F:proton-transporting ATPase activity, rotational mechanism"/>
    <property type="evidence" value="ECO:0007669"/>
    <property type="project" value="TreeGrafter"/>
</dbReference>
<dbReference type="CDD" id="cd06503">
    <property type="entry name" value="ATP-synt_Fo_b"/>
    <property type="match status" value="1"/>
</dbReference>
<dbReference type="HAMAP" id="MF_01398">
    <property type="entry name" value="ATP_synth_b_bprime"/>
    <property type="match status" value="1"/>
</dbReference>
<dbReference type="InterPro" id="IPR002146">
    <property type="entry name" value="ATP_synth_b/b'su_bac/chlpt"/>
</dbReference>
<dbReference type="InterPro" id="IPR050059">
    <property type="entry name" value="ATP_synthase_B_chain"/>
</dbReference>
<dbReference type="PANTHER" id="PTHR33445:SF1">
    <property type="entry name" value="ATP SYNTHASE SUBUNIT B"/>
    <property type="match status" value="1"/>
</dbReference>
<dbReference type="PANTHER" id="PTHR33445">
    <property type="entry name" value="ATP SYNTHASE SUBUNIT B', CHLOROPLASTIC"/>
    <property type="match status" value="1"/>
</dbReference>
<dbReference type="Pfam" id="PF00430">
    <property type="entry name" value="ATP-synt_B"/>
    <property type="match status" value="1"/>
</dbReference>
<evidence type="ECO:0000255" key="1">
    <source>
        <dbReference type="HAMAP-Rule" id="MF_01398"/>
    </source>
</evidence>
<organism>
    <name type="scientific">Rhodopseudomonas palustris (strain TIE-1)</name>
    <dbReference type="NCBI Taxonomy" id="395960"/>
    <lineage>
        <taxon>Bacteria</taxon>
        <taxon>Pseudomonadati</taxon>
        <taxon>Pseudomonadota</taxon>
        <taxon>Alphaproteobacteria</taxon>
        <taxon>Hyphomicrobiales</taxon>
        <taxon>Nitrobacteraceae</taxon>
        <taxon>Rhodopseudomonas</taxon>
    </lineage>
</organism>